<accession>O09107</accession>
<accession>P97744</accession>
<evidence type="ECO:0000250" key="1"/>
<evidence type="ECO:0000255" key="2"/>
<evidence type="ECO:0000269" key="3">
    <source>
    </source>
</evidence>
<evidence type="ECO:0000269" key="4">
    <source>
    </source>
</evidence>
<evidence type="ECO:0000305" key="5"/>
<organism>
    <name type="scientific">Mus musculus</name>
    <name type="common">Mouse</name>
    <dbReference type="NCBI Taxonomy" id="10090"/>
    <lineage>
        <taxon>Eukaryota</taxon>
        <taxon>Metazoa</taxon>
        <taxon>Chordata</taxon>
        <taxon>Craniata</taxon>
        <taxon>Vertebrata</taxon>
        <taxon>Euteleostomi</taxon>
        <taxon>Mammalia</taxon>
        <taxon>Eutheria</taxon>
        <taxon>Euarchontoglires</taxon>
        <taxon>Glires</taxon>
        <taxon>Rodentia</taxon>
        <taxon>Myomorpha</taxon>
        <taxon>Muroidea</taxon>
        <taxon>Muridae</taxon>
        <taxon>Murinae</taxon>
        <taxon>Mus</taxon>
        <taxon>Mus</taxon>
    </lineage>
</organism>
<keyword id="KW-0165">Cleavage on pair of basic residues</keyword>
<keyword id="KW-1015">Disulfide bond</keyword>
<keyword id="KW-0372">Hormone</keyword>
<keyword id="KW-1185">Reference proteome</keyword>
<keyword id="KW-0964">Secreted</keyword>
<keyword id="KW-0732">Signal</keyword>
<name>INSL3_MOUSE</name>
<comment type="function">
    <text evidence="1 3 4">Seems to play a role in testicular function. May be a trophic hormone with a role in testicular descent in fetal life. Is a ligand for LGR8 receptor (By similarity).</text>
</comment>
<comment type="subunit">
    <text evidence="1">Heterodimer of a B chain and an A chain linked by two disulfide bonds.</text>
</comment>
<comment type="subcellular location">
    <subcellularLocation>
        <location>Secreted</location>
    </subcellularLocation>
</comment>
<comment type="tissue specificity">
    <text>Expressed exclusively in Leydig cells of the testis.</text>
</comment>
<comment type="disruption phenotype">
    <text evidence="3">Male mice exhibit bilateral abdominal cryptorchidism due to alteration of gubernaculum development.</text>
</comment>
<comment type="similarity">
    <text evidence="5">Belongs to the insulin family.</text>
</comment>
<reference key="1">
    <citation type="submission" date="1997-01" db="EMBL/GenBank/DDBJ databases">
        <authorList>
            <person name="Zimmermann S.H."/>
        </authorList>
    </citation>
    <scope>NUCLEOTIDE SEQUENCE [GENOMIC DNA]</scope>
    <source>
        <strain>129/SvJ</strain>
    </source>
</reference>
<reference key="2">
    <citation type="journal article" date="1996" name="Endocrinology">
        <title>Molecular cloning and expression of the relaxin-like factor from the mouse testis.</title>
        <authorList>
            <person name="Pusch W."/>
            <person name="Balvers M."/>
            <person name="Ivell R."/>
        </authorList>
    </citation>
    <scope>NUCLEOTIDE SEQUENCE [MRNA]</scope>
    <source>
        <tissue>Testis</tissue>
    </source>
</reference>
<reference key="3">
    <citation type="journal article" date="1997" name="FEBS Lett.">
        <title>The mouse relaxin-like factor gene and its promoter are located within the 3' region of the JAK3 genomic sequence.</title>
        <authorList>
            <person name="Koskimies P."/>
            <person name="Spiess A.N."/>
            <person name="Lahti P."/>
            <person name="Huhtaniemi I."/>
            <person name="Ivell R."/>
        </authorList>
    </citation>
    <scope>NUCLEOTIDE SEQUENCE [GENOMIC DNA]</scope>
    <source>
        <strain>129/SvJ</strain>
    </source>
</reference>
<reference key="4">
    <citation type="journal article" date="1999" name="Nat. Genet.">
        <title>Cryptorchidism in mice mutant for Insl3.</title>
        <authorList>
            <person name="Nef S."/>
            <person name="Parada L.F."/>
        </authorList>
    </citation>
    <scope>FUNCTION</scope>
    <scope>DISRUPTION PHENOTYPE</scope>
</reference>
<reference key="5">
    <citation type="journal article" date="2001" name="J. Urol.">
        <title>Leydig insulin-like hormone, gubernacular development and testicular descent.</title>
        <authorList>
            <person name="Kubota Y."/>
            <person name="Nef S."/>
            <person name="Farmer P.J."/>
            <person name="Temelcos C."/>
            <person name="Parada L.F."/>
            <person name="Hutson J.M."/>
        </authorList>
    </citation>
    <scope>FUNCTION</scope>
</reference>
<reference key="6">
    <citation type="journal article" date="2010" name="Cell">
        <title>A tissue-specific atlas of mouse protein phosphorylation and expression.</title>
        <authorList>
            <person name="Huttlin E.L."/>
            <person name="Jedrychowski M.P."/>
            <person name="Elias J.E."/>
            <person name="Goswami T."/>
            <person name="Rad R."/>
            <person name="Beausoleil S.A."/>
            <person name="Villen J."/>
            <person name="Haas W."/>
            <person name="Sowa M.E."/>
            <person name="Gygi S.P."/>
        </authorList>
    </citation>
    <scope>IDENTIFICATION BY MASS SPECTROMETRY [LARGE SCALE ANALYSIS]</scope>
    <source>
        <tissue>Testis</tissue>
    </source>
</reference>
<sequence>MRAPLLLMLLALGSALRSPQPPEARAKLCGHHLVRTLVRVCGGPRWSPEATQPVETRDRELLQWLEQRHLLHALVADVDPALDPQLPRQASQRQRRSAATNAVHRCCLTGCTQQDLLGLCPH</sequence>
<proteinExistence type="evidence at protein level"/>
<protein>
    <recommendedName>
        <fullName>Insulin-like 3</fullName>
    </recommendedName>
    <alternativeName>
        <fullName>Leydig insulin-like peptide</fullName>
        <shortName>Ley-I-L</shortName>
    </alternativeName>
    <alternativeName>
        <fullName>Relaxin-like factor</fullName>
    </alternativeName>
    <component>
        <recommendedName>
            <fullName>Insulin-like 3 B chain</fullName>
        </recommendedName>
    </component>
    <component>
        <recommendedName>
            <fullName>Insulin-like 3 A chain</fullName>
        </recommendedName>
    </component>
</protein>
<gene>
    <name type="primary">Insl3</name>
    <name type="synonym">Rlf</name>
</gene>
<feature type="signal peptide" evidence="2">
    <location>
        <begin position="1"/>
        <end position="15"/>
    </location>
</feature>
<feature type="peptide" id="PRO_0000016143" description="Insulin-like 3 B chain">
    <location>
        <begin position="16"/>
        <end status="unknown"/>
    </location>
</feature>
<feature type="propeptide" id="PRO_0000016144" description="C peptide like" evidence="2">
    <location>
        <begin status="unknown"/>
        <end position="94"/>
    </location>
</feature>
<feature type="peptide" id="PRO_0000016145" description="Insulin-like 3 A chain">
    <location>
        <begin position="97"/>
        <end position="122"/>
    </location>
</feature>
<feature type="disulfide bond" description="Interchain (between B and A chains)" evidence="1">
    <location>
        <begin position="29"/>
        <end position="107"/>
    </location>
</feature>
<feature type="disulfide bond" description="Interchain (between B and A chains)" evidence="1">
    <location>
        <begin position="41"/>
        <end position="120"/>
    </location>
</feature>
<feature type="disulfide bond" evidence="1">
    <location>
        <begin position="106"/>
        <end position="111"/>
    </location>
</feature>
<feature type="sequence conflict" description="In Ref. 1; CAA64861." evidence="5" ref="1">
    <original>P</original>
    <variation>T</variation>
    <location>
        <position position="21"/>
    </location>
</feature>
<feature type="sequence conflict" description="In Ref. 1; CAA64861." evidence="5" ref="1">
    <original>VETRD</original>
    <variation>CGDPG</variation>
    <location>
        <begin position="54"/>
        <end position="58"/>
    </location>
</feature>
<feature type="sequence conflict" description="In Ref. 1; CAA64861." evidence="5" ref="1">
    <original>A</original>
    <variation>S</variation>
    <location>
        <position position="73"/>
    </location>
</feature>
<feature type="sequence conflict" description="In Ref. 1; CAA64861." evidence="5" ref="1">
    <original>QRQRR</original>
    <variation>HARG</variation>
    <location>
        <begin position="92"/>
        <end position="96"/>
    </location>
</feature>
<dbReference type="EMBL" id="X95603">
    <property type="protein sequence ID" value="CAA64861.1"/>
    <property type="molecule type" value="Genomic_DNA"/>
</dbReference>
<dbReference type="EMBL" id="S82815">
    <property type="protein sequence ID" value="AAB39365.1"/>
    <property type="molecule type" value="mRNA"/>
</dbReference>
<dbReference type="EMBL" id="AF136524">
    <property type="protein sequence ID" value="AAD24585.1"/>
    <property type="molecule type" value="Genomic_DNA"/>
</dbReference>
<dbReference type="CCDS" id="CCDS22404.1"/>
<dbReference type="FunCoup" id="O09107">
    <property type="interactions" value="95"/>
</dbReference>
<dbReference type="STRING" id="10090.ENSMUSP00000034261"/>
<dbReference type="PaxDb" id="10090-ENSMUSP00000034261"/>
<dbReference type="ProteomicsDB" id="269065"/>
<dbReference type="AGR" id="MGI:108427"/>
<dbReference type="MGI" id="MGI:108427">
    <property type="gene designation" value="Insl3"/>
</dbReference>
<dbReference type="eggNOG" id="ENOG502TFQI">
    <property type="taxonomic scope" value="Eukaryota"/>
</dbReference>
<dbReference type="InParanoid" id="O09107"/>
<dbReference type="PhylomeDB" id="O09107"/>
<dbReference type="Reactome" id="R-MMU-418555">
    <property type="pathway name" value="G alpha (s) signalling events"/>
</dbReference>
<dbReference type="Reactome" id="R-MMU-444821">
    <property type="pathway name" value="Relaxin receptors"/>
</dbReference>
<dbReference type="PRO" id="PR:O09107"/>
<dbReference type="Proteomes" id="UP000000589">
    <property type="component" value="Unplaced"/>
</dbReference>
<dbReference type="RNAct" id="O09107">
    <property type="molecule type" value="protein"/>
</dbReference>
<dbReference type="GO" id="GO:0005576">
    <property type="term" value="C:extracellular region"/>
    <property type="evidence" value="ECO:0007669"/>
    <property type="project" value="UniProtKB-SubCell"/>
</dbReference>
<dbReference type="GO" id="GO:0005179">
    <property type="term" value="F:hormone activity"/>
    <property type="evidence" value="ECO:0007669"/>
    <property type="project" value="UniProtKB-KW"/>
</dbReference>
<dbReference type="GO" id="GO:0001701">
    <property type="term" value="P:in utero embryonic development"/>
    <property type="evidence" value="ECO:0000315"/>
    <property type="project" value="MGI"/>
</dbReference>
<dbReference type="GO" id="GO:0008584">
    <property type="term" value="P:male gonad development"/>
    <property type="evidence" value="ECO:0000315"/>
    <property type="project" value="MGI"/>
</dbReference>
<dbReference type="GO" id="GO:2000018">
    <property type="term" value="P:regulation of male gonad development"/>
    <property type="evidence" value="ECO:0000315"/>
    <property type="project" value="CACAO"/>
</dbReference>
<dbReference type="CDD" id="cd04365">
    <property type="entry name" value="IlGF_relaxin_like"/>
    <property type="match status" value="1"/>
</dbReference>
<dbReference type="Gene3D" id="1.10.100.10">
    <property type="entry name" value="Insulin-like"/>
    <property type="match status" value="1"/>
</dbReference>
<dbReference type="InterPro" id="IPR043387">
    <property type="entry name" value="INSL3/INSL4"/>
</dbReference>
<dbReference type="InterPro" id="IPR016179">
    <property type="entry name" value="Insulin-like"/>
</dbReference>
<dbReference type="InterPro" id="IPR036438">
    <property type="entry name" value="Insulin-like_sf"/>
</dbReference>
<dbReference type="InterPro" id="IPR022353">
    <property type="entry name" value="Insulin_CS"/>
</dbReference>
<dbReference type="InterPro" id="IPR022352">
    <property type="entry name" value="Insulin_family"/>
</dbReference>
<dbReference type="PANTHER" id="PTHR10423">
    <property type="entry name" value="INSULIN-LIKE 3"/>
    <property type="match status" value="1"/>
</dbReference>
<dbReference type="PANTHER" id="PTHR10423:SF3">
    <property type="entry name" value="INSULIN-LIKE 3"/>
    <property type="match status" value="1"/>
</dbReference>
<dbReference type="Pfam" id="PF00049">
    <property type="entry name" value="Insulin"/>
    <property type="match status" value="1"/>
</dbReference>
<dbReference type="PRINTS" id="PR00276">
    <property type="entry name" value="INSULINFAMLY"/>
</dbReference>
<dbReference type="SMART" id="SM00078">
    <property type="entry name" value="IlGF"/>
    <property type="match status" value="1"/>
</dbReference>
<dbReference type="SUPFAM" id="SSF56994">
    <property type="entry name" value="Insulin-like"/>
    <property type="match status" value="1"/>
</dbReference>
<dbReference type="PROSITE" id="PS00262">
    <property type="entry name" value="INSULIN"/>
    <property type="match status" value="1"/>
</dbReference>